<sequence length="122" mass="13627">MKSVLYSYILFLSCIIINGRDIAPHAPSDGKCKDNEYKRHNLCPGTYASRLCDSKTNTQCTPCGSGTFTSRNNHLPACLSCNGRRDRVTRLTIESVNALPDIIVFSKDHPDARHVFPKQNVE</sequence>
<keyword id="KW-0675">Receptor</keyword>
<keyword id="KW-1185">Reference proteome</keyword>
<gene>
    <name type="primary">OPG002</name>
    <name type="synonym">C22L</name>
    <name type="ordered locus">VACWR004</name>
</gene>
<gene>
    <name type="primary">B28R</name>
    <name type="ordered locus">VACWR215</name>
</gene>
<proteinExistence type="evidence at transcript level"/>
<accession>Q76ZJ3</accession>
<organismHost>
    <name type="scientific">Bos taurus</name>
    <name type="common">Bovine</name>
    <dbReference type="NCBI Taxonomy" id="9913"/>
</organismHost>
<organism>
    <name type="scientific">Vaccinia virus (strain Western Reserve)</name>
    <name type="common">VACV</name>
    <name type="synonym">Vaccinia virus (strain WR)</name>
    <dbReference type="NCBI Taxonomy" id="10254"/>
    <lineage>
        <taxon>Viruses</taxon>
        <taxon>Varidnaviria</taxon>
        <taxon>Bamfordvirae</taxon>
        <taxon>Nucleocytoviricota</taxon>
        <taxon>Pokkesviricetes</taxon>
        <taxon>Chitovirales</taxon>
        <taxon>Poxviridae</taxon>
        <taxon>Chordopoxvirinae</taxon>
        <taxon>Orthopoxvirus</taxon>
        <taxon>Vaccinia virus</taxon>
    </lineage>
</organism>
<evidence type="ECO:0000269" key="1">
    <source>
    </source>
</evidence>
<dbReference type="EMBL" id="AY243312">
    <property type="protein sequence ID" value="AAO89283.1"/>
    <property type="molecule type" value="Genomic_DNA"/>
</dbReference>
<dbReference type="EMBL" id="AY243312">
    <property type="protein sequence ID" value="AAO89494.1"/>
    <property type="molecule type" value="Genomic_DNA"/>
</dbReference>
<dbReference type="RefSeq" id="YP_232886.1">
    <property type="nucleotide sequence ID" value="NC_006998.1"/>
</dbReference>
<dbReference type="RefSeq" id="YP_233097.1">
    <property type="nucleotide sequence ID" value="NC_006998.1"/>
</dbReference>
<dbReference type="SMR" id="Q76ZJ3"/>
<dbReference type="DNASU" id="3707619"/>
<dbReference type="GeneID" id="3707612"/>
<dbReference type="GeneID" id="3707619"/>
<dbReference type="KEGG" id="vg:3707612"/>
<dbReference type="KEGG" id="vg:3707619"/>
<dbReference type="Proteomes" id="UP000000344">
    <property type="component" value="Genome"/>
</dbReference>
<dbReference type="Gene3D" id="2.10.50.10">
    <property type="entry name" value="Tumor Necrosis Factor Receptor, subunit A, domain 2"/>
    <property type="match status" value="1"/>
</dbReference>
<dbReference type="SUPFAM" id="SSF57586">
    <property type="entry name" value="TNF receptor-like"/>
    <property type="match status" value="1"/>
</dbReference>
<protein>
    <recommendedName>
        <fullName>Truncated CrmB protein</fullName>
    </recommendedName>
</protein>
<reference key="1">
    <citation type="submission" date="2003-02" db="EMBL/GenBank/DDBJ databases">
        <title>Sequencing of the coding region of Vaccinia-WR to an average 9-fold redundancy and an error rate of 0.16/10kb.</title>
        <authorList>
            <person name="Esposito J.J."/>
            <person name="Frace A.M."/>
            <person name="Sammons S.A."/>
            <person name="Olsen-Rasmussen M."/>
            <person name="Osborne J."/>
            <person name="Wohlhueter R."/>
        </authorList>
    </citation>
    <scope>NUCLEOTIDE SEQUENCE [GENOMIC DNA]</scope>
</reference>
<reference key="2">
    <citation type="journal article" date="2015" name="J. Virol.">
        <title>Deciphering poxvirus gene expression by RNA sequencing and ribosome profiling.</title>
        <authorList>
            <person name="Yang Z."/>
            <person name="Cao S."/>
            <person name="Martens C.A."/>
            <person name="Porcella S.F."/>
            <person name="Xie Z."/>
            <person name="Ma M."/>
            <person name="Shen B."/>
            <person name="Moss B."/>
        </authorList>
    </citation>
    <scope>INDUCTION</scope>
</reference>
<feature type="chain" id="PRO_0000412911" description="Truncated CrmB protein">
    <location>
        <begin position="1"/>
        <end position="122"/>
    </location>
</feature>
<name>C22L_VACCW</name>
<comment type="function">
    <text>The protein is truncated in this strain and presumably inactive. It has similarities with variola virus CrmB, but the product is inactivated due to several premature stop codons.</text>
</comment>
<comment type="induction">
    <text evidence="1">Expressed in the early phase of the viral replicative cycle.</text>
</comment>